<name>RECA_SYNFM</name>
<proteinExistence type="inferred from homology"/>
<reference key="1">
    <citation type="submission" date="2006-10" db="EMBL/GenBank/DDBJ databases">
        <title>Complete sequence of Syntrophobacter fumaroxidans MPOB.</title>
        <authorList>
            <consortium name="US DOE Joint Genome Institute"/>
            <person name="Copeland A."/>
            <person name="Lucas S."/>
            <person name="Lapidus A."/>
            <person name="Barry K."/>
            <person name="Detter J.C."/>
            <person name="Glavina del Rio T."/>
            <person name="Hammon N."/>
            <person name="Israni S."/>
            <person name="Pitluck S."/>
            <person name="Goltsman E.G."/>
            <person name="Martinez M."/>
            <person name="Schmutz J."/>
            <person name="Larimer F."/>
            <person name="Land M."/>
            <person name="Hauser L."/>
            <person name="Kyrpides N."/>
            <person name="Kim E."/>
            <person name="Boone D.R."/>
            <person name="Brockman F."/>
            <person name="Culley D."/>
            <person name="Ferry J."/>
            <person name="Gunsalus R."/>
            <person name="McInerney M.J."/>
            <person name="Morrison M."/>
            <person name="Plugge C."/>
            <person name="Rohlin L."/>
            <person name="Scholten J."/>
            <person name="Sieber J."/>
            <person name="Stams A.J.M."/>
            <person name="Worm P."/>
            <person name="Henstra A.M."/>
            <person name="Richardson P."/>
        </authorList>
    </citation>
    <scope>NUCLEOTIDE SEQUENCE [LARGE SCALE GENOMIC DNA]</scope>
    <source>
        <strain>DSM 10017 / MPOB</strain>
    </source>
</reference>
<protein>
    <recommendedName>
        <fullName evidence="1">Protein RecA</fullName>
    </recommendedName>
    <alternativeName>
        <fullName evidence="1">Recombinase A</fullName>
    </alternativeName>
</protein>
<evidence type="ECO:0000255" key="1">
    <source>
        <dbReference type="HAMAP-Rule" id="MF_00268"/>
    </source>
</evidence>
<organism>
    <name type="scientific">Syntrophobacter fumaroxidans (strain DSM 10017 / MPOB)</name>
    <dbReference type="NCBI Taxonomy" id="335543"/>
    <lineage>
        <taxon>Bacteria</taxon>
        <taxon>Pseudomonadati</taxon>
        <taxon>Thermodesulfobacteriota</taxon>
        <taxon>Syntrophobacteria</taxon>
        <taxon>Syntrophobacterales</taxon>
        <taxon>Syntrophobacteraceae</taxon>
        <taxon>Syntrophobacter</taxon>
    </lineage>
</organism>
<dbReference type="EMBL" id="CP000478">
    <property type="protein sequence ID" value="ABK18206.1"/>
    <property type="molecule type" value="Genomic_DNA"/>
</dbReference>
<dbReference type="RefSeq" id="WP_011699374.1">
    <property type="nucleotide sequence ID" value="NC_008554.1"/>
</dbReference>
<dbReference type="SMR" id="A0LLA4"/>
<dbReference type="FunCoup" id="A0LLA4">
    <property type="interactions" value="509"/>
</dbReference>
<dbReference type="STRING" id="335543.Sfum_2528"/>
<dbReference type="KEGG" id="sfu:Sfum_2528"/>
<dbReference type="eggNOG" id="COG0468">
    <property type="taxonomic scope" value="Bacteria"/>
</dbReference>
<dbReference type="HOGENOM" id="CLU_040469_1_2_7"/>
<dbReference type="InParanoid" id="A0LLA4"/>
<dbReference type="OrthoDB" id="9776733at2"/>
<dbReference type="Proteomes" id="UP000001784">
    <property type="component" value="Chromosome"/>
</dbReference>
<dbReference type="GO" id="GO:0005829">
    <property type="term" value="C:cytosol"/>
    <property type="evidence" value="ECO:0007669"/>
    <property type="project" value="TreeGrafter"/>
</dbReference>
<dbReference type="GO" id="GO:0005524">
    <property type="term" value="F:ATP binding"/>
    <property type="evidence" value="ECO:0007669"/>
    <property type="project" value="UniProtKB-UniRule"/>
</dbReference>
<dbReference type="GO" id="GO:0016887">
    <property type="term" value="F:ATP hydrolysis activity"/>
    <property type="evidence" value="ECO:0007669"/>
    <property type="project" value="InterPro"/>
</dbReference>
<dbReference type="GO" id="GO:0140664">
    <property type="term" value="F:ATP-dependent DNA damage sensor activity"/>
    <property type="evidence" value="ECO:0007669"/>
    <property type="project" value="InterPro"/>
</dbReference>
<dbReference type="GO" id="GO:0003684">
    <property type="term" value="F:damaged DNA binding"/>
    <property type="evidence" value="ECO:0007669"/>
    <property type="project" value="UniProtKB-UniRule"/>
</dbReference>
<dbReference type="GO" id="GO:0003697">
    <property type="term" value="F:single-stranded DNA binding"/>
    <property type="evidence" value="ECO:0007669"/>
    <property type="project" value="UniProtKB-UniRule"/>
</dbReference>
<dbReference type="GO" id="GO:0006310">
    <property type="term" value="P:DNA recombination"/>
    <property type="evidence" value="ECO:0007669"/>
    <property type="project" value="UniProtKB-UniRule"/>
</dbReference>
<dbReference type="GO" id="GO:0006281">
    <property type="term" value="P:DNA repair"/>
    <property type="evidence" value="ECO:0007669"/>
    <property type="project" value="UniProtKB-UniRule"/>
</dbReference>
<dbReference type="GO" id="GO:0009432">
    <property type="term" value="P:SOS response"/>
    <property type="evidence" value="ECO:0007669"/>
    <property type="project" value="UniProtKB-UniRule"/>
</dbReference>
<dbReference type="CDD" id="cd00983">
    <property type="entry name" value="RecA"/>
    <property type="match status" value="1"/>
</dbReference>
<dbReference type="FunFam" id="3.40.50.300:FF:000087">
    <property type="entry name" value="Recombinase RecA"/>
    <property type="match status" value="1"/>
</dbReference>
<dbReference type="Gene3D" id="3.40.50.300">
    <property type="entry name" value="P-loop containing nucleotide triphosphate hydrolases"/>
    <property type="match status" value="1"/>
</dbReference>
<dbReference type="HAMAP" id="MF_00268">
    <property type="entry name" value="RecA"/>
    <property type="match status" value="1"/>
</dbReference>
<dbReference type="InterPro" id="IPR003593">
    <property type="entry name" value="AAA+_ATPase"/>
</dbReference>
<dbReference type="InterPro" id="IPR013765">
    <property type="entry name" value="DNA_recomb/repair_RecA"/>
</dbReference>
<dbReference type="InterPro" id="IPR020584">
    <property type="entry name" value="DNA_recomb/repair_RecA_CS"/>
</dbReference>
<dbReference type="InterPro" id="IPR027417">
    <property type="entry name" value="P-loop_NTPase"/>
</dbReference>
<dbReference type="InterPro" id="IPR049261">
    <property type="entry name" value="RecA-like_C"/>
</dbReference>
<dbReference type="InterPro" id="IPR049428">
    <property type="entry name" value="RecA-like_N"/>
</dbReference>
<dbReference type="InterPro" id="IPR020588">
    <property type="entry name" value="RecA_ATP-bd"/>
</dbReference>
<dbReference type="InterPro" id="IPR023400">
    <property type="entry name" value="RecA_C_sf"/>
</dbReference>
<dbReference type="InterPro" id="IPR020587">
    <property type="entry name" value="RecA_monomer-monomer_interface"/>
</dbReference>
<dbReference type="NCBIfam" id="TIGR02012">
    <property type="entry name" value="tigrfam_recA"/>
    <property type="match status" value="1"/>
</dbReference>
<dbReference type="PANTHER" id="PTHR45900:SF1">
    <property type="entry name" value="MITOCHONDRIAL DNA REPAIR PROTEIN RECA HOMOLOG-RELATED"/>
    <property type="match status" value="1"/>
</dbReference>
<dbReference type="PANTHER" id="PTHR45900">
    <property type="entry name" value="RECA"/>
    <property type="match status" value="1"/>
</dbReference>
<dbReference type="Pfam" id="PF00154">
    <property type="entry name" value="RecA"/>
    <property type="match status" value="1"/>
</dbReference>
<dbReference type="Pfam" id="PF21096">
    <property type="entry name" value="RecA_C"/>
    <property type="match status" value="1"/>
</dbReference>
<dbReference type="PRINTS" id="PR00142">
    <property type="entry name" value="RECA"/>
</dbReference>
<dbReference type="SMART" id="SM00382">
    <property type="entry name" value="AAA"/>
    <property type="match status" value="1"/>
</dbReference>
<dbReference type="SUPFAM" id="SSF52540">
    <property type="entry name" value="P-loop containing nucleoside triphosphate hydrolases"/>
    <property type="match status" value="1"/>
</dbReference>
<dbReference type="SUPFAM" id="SSF54752">
    <property type="entry name" value="RecA protein, C-terminal domain"/>
    <property type="match status" value="1"/>
</dbReference>
<dbReference type="PROSITE" id="PS00321">
    <property type="entry name" value="RECA_1"/>
    <property type="match status" value="1"/>
</dbReference>
<dbReference type="PROSITE" id="PS50162">
    <property type="entry name" value="RECA_2"/>
    <property type="match status" value="1"/>
</dbReference>
<dbReference type="PROSITE" id="PS50163">
    <property type="entry name" value="RECA_3"/>
    <property type="match status" value="1"/>
</dbReference>
<keyword id="KW-0067">ATP-binding</keyword>
<keyword id="KW-0963">Cytoplasm</keyword>
<keyword id="KW-0227">DNA damage</keyword>
<keyword id="KW-0233">DNA recombination</keyword>
<keyword id="KW-0234">DNA repair</keyword>
<keyword id="KW-0238">DNA-binding</keyword>
<keyword id="KW-0547">Nucleotide-binding</keyword>
<keyword id="KW-1185">Reference proteome</keyword>
<keyword id="KW-0742">SOS response</keyword>
<sequence>MGAVDERQRAIDTAVSQIERMCGKGAIMRLGEGAQNVEIPVISTGCLSLDLALGIGGVARGRIMEIFGPESSGKTTLALHVVAEAQKLGGLAAFIDAEHALDVNYARKLGVQVEDLLISQPDYGEQALEIAEILVRSNAIDVIVVDSVAALVPKAEIEGEMGDPHVGLQARLMSQALRKLVSSISKSRTCVIFINQIRMKIGVMYGSPETTTGGNALKFYATMRLDIRRVGPIKDGQEVVGNRTRVKVVKNKIAPPFREVEFDVVYGRGISREGDILDLAVESGAIEKSGTWYSYSGERLGQGRENAKNFLREHPDLLGELERKLREAHNLRFSPGPVTGAGE</sequence>
<accession>A0LLA4</accession>
<feature type="chain" id="PRO_1000048021" description="Protein RecA">
    <location>
        <begin position="1"/>
        <end position="343"/>
    </location>
</feature>
<feature type="binding site" evidence="1">
    <location>
        <begin position="68"/>
        <end position="75"/>
    </location>
    <ligand>
        <name>ATP</name>
        <dbReference type="ChEBI" id="CHEBI:30616"/>
    </ligand>
</feature>
<gene>
    <name evidence="1" type="primary">recA</name>
    <name type="ordered locus">Sfum_2528</name>
</gene>
<comment type="function">
    <text evidence="1">Can catalyze the hydrolysis of ATP in the presence of single-stranded DNA, the ATP-dependent uptake of single-stranded DNA by duplex DNA, and the ATP-dependent hybridization of homologous single-stranded DNAs. It interacts with LexA causing its activation and leading to its autocatalytic cleavage.</text>
</comment>
<comment type="subcellular location">
    <subcellularLocation>
        <location evidence="1">Cytoplasm</location>
    </subcellularLocation>
</comment>
<comment type="similarity">
    <text evidence="1">Belongs to the RecA family.</text>
</comment>